<organism>
    <name type="scientific">Streptococcus pyogenes serotype M12 (strain MGAS2096)</name>
    <dbReference type="NCBI Taxonomy" id="370553"/>
    <lineage>
        <taxon>Bacteria</taxon>
        <taxon>Bacillati</taxon>
        <taxon>Bacillota</taxon>
        <taxon>Bacilli</taxon>
        <taxon>Lactobacillales</taxon>
        <taxon>Streptococcaceae</taxon>
        <taxon>Streptococcus</taxon>
    </lineage>
</organism>
<dbReference type="EC" id="4.2.1.10" evidence="1"/>
<dbReference type="EMBL" id="CP000261">
    <property type="protein sequence ID" value="ABF35741.1"/>
    <property type="molecule type" value="Genomic_DNA"/>
</dbReference>
<dbReference type="SMR" id="Q1JCG7"/>
<dbReference type="KEGG" id="spj:MGAS2096_Spy0689"/>
<dbReference type="HOGENOM" id="CLU_064444_0_0_9"/>
<dbReference type="UniPathway" id="UPA00053">
    <property type="reaction ID" value="UER00086"/>
</dbReference>
<dbReference type="GO" id="GO:0003855">
    <property type="term" value="F:3-dehydroquinate dehydratase activity"/>
    <property type="evidence" value="ECO:0007669"/>
    <property type="project" value="UniProtKB-UniRule"/>
</dbReference>
<dbReference type="GO" id="GO:0046279">
    <property type="term" value="P:3,4-dihydroxybenzoate biosynthetic process"/>
    <property type="evidence" value="ECO:0007669"/>
    <property type="project" value="UniProtKB-ARBA"/>
</dbReference>
<dbReference type="GO" id="GO:0008652">
    <property type="term" value="P:amino acid biosynthetic process"/>
    <property type="evidence" value="ECO:0007669"/>
    <property type="project" value="UniProtKB-KW"/>
</dbReference>
<dbReference type="GO" id="GO:0009073">
    <property type="term" value="P:aromatic amino acid family biosynthetic process"/>
    <property type="evidence" value="ECO:0007669"/>
    <property type="project" value="UniProtKB-KW"/>
</dbReference>
<dbReference type="GO" id="GO:0009423">
    <property type="term" value="P:chorismate biosynthetic process"/>
    <property type="evidence" value="ECO:0007669"/>
    <property type="project" value="UniProtKB-UniRule"/>
</dbReference>
<dbReference type="CDD" id="cd00502">
    <property type="entry name" value="DHQase_I"/>
    <property type="match status" value="1"/>
</dbReference>
<dbReference type="Gene3D" id="3.20.20.70">
    <property type="entry name" value="Aldolase class I"/>
    <property type="match status" value="1"/>
</dbReference>
<dbReference type="HAMAP" id="MF_00214">
    <property type="entry name" value="AroD"/>
    <property type="match status" value="1"/>
</dbReference>
<dbReference type="InterPro" id="IPR013785">
    <property type="entry name" value="Aldolase_TIM"/>
</dbReference>
<dbReference type="InterPro" id="IPR001381">
    <property type="entry name" value="DHquinase_I"/>
</dbReference>
<dbReference type="InterPro" id="IPR050146">
    <property type="entry name" value="Type-I_3-dehydroquinase"/>
</dbReference>
<dbReference type="NCBIfam" id="TIGR01093">
    <property type="entry name" value="aroD"/>
    <property type="match status" value="1"/>
</dbReference>
<dbReference type="PANTHER" id="PTHR43699">
    <property type="entry name" value="3-DEHYDROQUINATE DEHYDRATASE"/>
    <property type="match status" value="1"/>
</dbReference>
<dbReference type="PANTHER" id="PTHR43699:SF1">
    <property type="entry name" value="3-DEHYDROQUINATE DEHYDRATASE"/>
    <property type="match status" value="1"/>
</dbReference>
<dbReference type="Pfam" id="PF01487">
    <property type="entry name" value="DHquinase_I"/>
    <property type="match status" value="1"/>
</dbReference>
<dbReference type="SUPFAM" id="SSF51569">
    <property type="entry name" value="Aldolase"/>
    <property type="match status" value="1"/>
</dbReference>
<protein>
    <recommendedName>
        <fullName evidence="1">3-dehydroquinate dehydratase</fullName>
        <shortName evidence="1">3-dehydroquinase</shortName>
        <ecNumber evidence="1">4.2.1.10</ecNumber>
    </recommendedName>
    <alternativeName>
        <fullName evidence="1">Type I DHQase</fullName>
    </alternativeName>
    <alternativeName>
        <fullName evidence="1">Type I dehydroquinase</fullName>
        <shortName evidence="1">DHQ1</shortName>
    </alternativeName>
</protein>
<keyword id="KW-0028">Amino-acid biosynthesis</keyword>
<keyword id="KW-0057">Aromatic amino acid biosynthesis</keyword>
<keyword id="KW-0456">Lyase</keyword>
<keyword id="KW-0704">Schiff base</keyword>
<evidence type="ECO:0000255" key="1">
    <source>
        <dbReference type="HAMAP-Rule" id="MF_00214"/>
    </source>
</evidence>
<name>AROD_STRPB</name>
<accession>Q1JCG7</accession>
<proteinExistence type="inferred from homology"/>
<gene>
    <name evidence="1" type="primary">aroD</name>
    <name type="ordered locus">MGAS2096_Spy0689</name>
</gene>
<reference key="1">
    <citation type="journal article" date="2006" name="Proc. Natl. Acad. Sci. U.S.A.">
        <title>Molecular genetic anatomy of inter- and intraserotype variation in the human bacterial pathogen group A Streptococcus.</title>
        <authorList>
            <person name="Beres S.B."/>
            <person name="Richter E.W."/>
            <person name="Nagiec M.J."/>
            <person name="Sumby P."/>
            <person name="Porcella S.F."/>
            <person name="DeLeo F.R."/>
            <person name="Musser J.M."/>
        </authorList>
    </citation>
    <scope>NUCLEOTIDE SEQUENCE [LARGE SCALE GENOMIC DNA]</scope>
    <source>
        <strain>MGAS2096</strain>
    </source>
</reference>
<comment type="function">
    <text evidence="1">Involved in the third step of the chorismate pathway, which leads to the biosynthesis of aromatic amino acids. Catalyzes the cis-dehydration of 3-dehydroquinate (DHQ) and introduces the first double bond of the aromatic ring to yield 3-dehydroshikimate.</text>
</comment>
<comment type="catalytic activity">
    <reaction evidence="1">
        <text>3-dehydroquinate = 3-dehydroshikimate + H2O</text>
        <dbReference type="Rhea" id="RHEA:21096"/>
        <dbReference type="ChEBI" id="CHEBI:15377"/>
        <dbReference type="ChEBI" id="CHEBI:16630"/>
        <dbReference type="ChEBI" id="CHEBI:32364"/>
        <dbReference type="EC" id="4.2.1.10"/>
    </reaction>
</comment>
<comment type="pathway">
    <text evidence="1">Metabolic intermediate biosynthesis; chorismate biosynthesis; chorismate from D-erythrose 4-phosphate and phosphoenolpyruvate: step 3/7.</text>
</comment>
<comment type="subunit">
    <text evidence="1">Homodimer.</text>
</comment>
<comment type="similarity">
    <text evidence="1">Belongs to the type-I 3-dehydroquinase family.</text>
</comment>
<sequence>MRIVAPVMPRHFDEAQAIDISKYEDVNLIEWRADFLPKDEIVAVAPAIFEKFAGKEIIFTLRTVQEGGNITLSSQEYVDIIKEINAIYNPDYIDFEYFTHKSVFQEMLDFPNLILSYHNFEETPENLMEAFSEMTKLAPRVVKIAVMPQSEQDVLDLMNYTRGFKTLNPEQEFATISMGKLGRLSRFAGDVIGSSWTYVSLDHVSGPGQVTLNDMKRIIEVLEMDISN</sequence>
<feature type="chain" id="PRO_1000043196" description="3-dehydroquinate dehydratase">
    <location>
        <begin position="1"/>
        <end position="228"/>
    </location>
</feature>
<feature type="active site" description="Proton donor/acceptor" evidence="1">
    <location>
        <position position="118"/>
    </location>
</feature>
<feature type="active site" description="Schiff-base intermediate with substrate" evidence="1">
    <location>
        <position position="143"/>
    </location>
</feature>
<feature type="binding site" evidence="1">
    <location>
        <begin position="30"/>
        <end position="32"/>
    </location>
    <ligand>
        <name>3-dehydroquinate</name>
        <dbReference type="ChEBI" id="CHEBI:32364"/>
    </ligand>
</feature>
<feature type="binding site" evidence="1">
    <location>
        <position position="62"/>
    </location>
    <ligand>
        <name>3-dehydroquinate</name>
        <dbReference type="ChEBI" id="CHEBI:32364"/>
    </ligand>
</feature>
<feature type="binding site" evidence="1">
    <location>
        <position position="186"/>
    </location>
    <ligand>
        <name>3-dehydroquinate</name>
        <dbReference type="ChEBI" id="CHEBI:32364"/>
    </ligand>
</feature>
<feature type="binding site" evidence="1">
    <location>
        <position position="205"/>
    </location>
    <ligand>
        <name>3-dehydroquinate</name>
        <dbReference type="ChEBI" id="CHEBI:32364"/>
    </ligand>
</feature>
<feature type="binding site" evidence="1">
    <location>
        <position position="209"/>
    </location>
    <ligand>
        <name>3-dehydroquinate</name>
        <dbReference type="ChEBI" id="CHEBI:32364"/>
    </ligand>
</feature>